<keyword id="KW-0007">Acetylation</keyword>
<keyword id="KW-1017">Isopeptide bond</keyword>
<keyword id="KW-0472">Membrane</keyword>
<keyword id="KW-0496">Mitochondrion</keyword>
<keyword id="KW-1000">Mitochondrion outer membrane</keyword>
<keyword id="KW-0500">Molybdenum</keyword>
<keyword id="KW-0560">Oxidoreductase</keyword>
<keyword id="KW-0576">Peroxisome</keyword>
<keyword id="KW-1185">Reference proteome</keyword>
<keyword id="KW-0809">Transit peptide</keyword>
<keyword id="KW-0832">Ubl conjugation</keyword>
<reference key="1">
    <citation type="submission" date="2000-11" db="EMBL/GenBank/DDBJ databases">
        <title>DNA sequences of macaque genes expressed in brain or testis and its evolutionary implications.</title>
        <authorList>
            <consortium name="International consortium for macaque cDNA sequencing and analysis"/>
        </authorList>
    </citation>
    <scope>NUCLEOTIDE SEQUENCE [LARGE SCALE MRNA]</scope>
    <source>
        <tissue>Brain cortex</tissue>
    </source>
</reference>
<sequence length="335" mass="37757">MGASSSSALARLGLPAQARPRWLGVAVLGLAAVALGAVAWRRAWPRRRRRLQQVGTVAKLWIYPVKSCKGVPVSEAECTAMGLRSGNLRDRFLLVIKEDGHIVTARQEPRLVLVSITYENNCLIFKAPDMDQLVLPSKQPSSNKLHNCRIFGLDIKGRDCGNEAAQWFTNFLKTEVYRLVQFETNMKGRTSRKLLPTLDQNYQVAYPDCSPLLIMTDASLVDLNTRIEKKMKMENFRPNIVVTGCDAFEEDTWDELLIGSVEVKKIMACPRCILTTVDPDTGVIDRKEPLDTLKSYRLCDPSERELYKLSPLFGIYYSVEKIGSLRVGDPVYRMV</sequence>
<proteinExistence type="evidence at transcript level"/>
<organism>
    <name type="scientific">Macaca fascicularis</name>
    <name type="common">Crab-eating macaque</name>
    <name type="synonym">Cynomolgus monkey</name>
    <dbReference type="NCBI Taxonomy" id="9541"/>
    <lineage>
        <taxon>Eukaryota</taxon>
        <taxon>Metazoa</taxon>
        <taxon>Chordata</taxon>
        <taxon>Craniata</taxon>
        <taxon>Vertebrata</taxon>
        <taxon>Euteleostomi</taxon>
        <taxon>Mammalia</taxon>
        <taxon>Eutheria</taxon>
        <taxon>Euarchontoglires</taxon>
        <taxon>Primates</taxon>
        <taxon>Haplorrhini</taxon>
        <taxon>Catarrhini</taxon>
        <taxon>Cercopithecidae</taxon>
        <taxon>Cercopithecinae</taxon>
        <taxon>Macaca</taxon>
    </lineage>
</organism>
<gene>
    <name type="primary">MTARC2</name>
    <name type="synonym">MARC2</name>
    <name type="synonym">MOSC2</name>
    <name type="ORF">QccE-16325</name>
    <name type="ORF">QccE-19561</name>
</gene>
<comment type="function">
    <text evidence="3">Catalyzes the reduction of N-oxygenated molecules, acting as a counterpart of cytochrome P450 and flavin-containing monooxygenases in metabolic cycles. As a component of prodrug-converting system, reduces a multitude of N-hydroxylated prodrugs particularly amidoximes, leading to increased drug bioavailability. May be involved in mitochondrial N(omega)-hydroxy-L-arginine (NOHA) reduction, regulating endogenous nitric oxide levels and biosynthesis. Postulated to cleave the N-OH bond of N-hydroxylated substrates in concert with electron transfer from NADH to cytochrome b5 reductase then to cytochrome b5, the ultimate electron donor that primes the active site for substrate reduction.</text>
</comment>
<comment type="catalytic activity">
    <reaction evidence="3">
        <text>N(omega)-hydroxy-L-arginine + 2 Fe(II)-[cytochrome b5] + 2 H(+) = L-arginine + 2 Fe(III)-[cytochrome b5] + H2O</text>
        <dbReference type="Rhea" id="RHEA:61644"/>
        <dbReference type="Rhea" id="RHEA-COMP:10438"/>
        <dbReference type="Rhea" id="RHEA-COMP:10439"/>
        <dbReference type="ChEBI" id="CHEBI:15377"/>
        <dbReference type="ChEBI" id="CHEBI:15378"/>
        <dbReference type="ChEBI" id="CHEBI:29033"/>
        <dbReference type="ChEBI" id="CHEBI:29034"/>
        <dbReference type="ChEBI" id="CHEBI:32682"/>
        <dbReference type="ChEBI" id="CHEBI:60107"/>
    </reaction>
    <physiologicalReaction direction="left-to-right" evidence="3">
        <dbReference type="Rhea" id="RHEA:61645"/>
    </physiologicalReaction>
</comment>
<comment type="cofactor">
    <cofactor evidence="1">
        <name>Mo-molybdopterin</name>
        <dbReference type="ChEBI" id="CHEBI:71302"/>
    </cofactor>
    <text evidence="1">Binds 1 Mo-molybdopterin (Mo-MPT) cofactor per subunit.</text>
</comment>
<comment type="subunit">
    <text evidence="1">Component of a complex composed of cytochrome b5, NADH-cytochrome b5 reductase (CYB5R3) and MTARC2.</text>
</comment>
<comment type="subcellular location">
    <subcellularLocation>
        <location evidence="1">Mitochondrion outer membrane</location>
        <topology evidence="1">Peripheral membrane protein</topology>
    </subcellularLocation>
    <subcellularLocation>
        <location evidence="1">Peroxisome</location>
    </subcellularLocation>
</comment>
<comment type="PTM">
    <text evidence="3">Ubiquitinated by PRKN during mitophagy, leading to its degradation and enhancement of mitophagy. Deubiquitinated by USP30.</text>
</comment>
<protein>
    <recommendedName>
        <fullName>Mitochondrial amidoxime reducing component 2</fullName>
        <shortName>mARC2</shortName>
        <ecNumber>1.7.-.-</ecNumber>
    </recommendedName>
    <alternativeName>
        <fullName>Molybdenum cofactor sulfurase C-terminal domain-containing protein 2</fullName>
        <shortName>MOSC domain-containing protein 2</shortName>
        <shortName>Moco sulfurase C-terminal domain-containing protein 2</shortName>
    </alternativeName>
</protein>
<evidence type="ECO:0000250" key="1"/>
<evidence type="ECO:0000250" key="2">
    <source>
        <dbReference type="UniProtKB" id="Q922Q1"/>
    </source>
</evidence>
<evidence type="ECO:0000250" key="3">
    <source>
        <dbReference type="UniProtKB" id="Q969Z3"/>
    </source>
</evidence>
<evidence type="ECO:0000255" key="4"/>
<evidence type="ECO:0000255" key="5">
    <source>
        <dbReference type="PROSITE-ProRule" id="PRU00670"/>
    </source>
</evidence>
<evidence type="ECO:0000305" key="6"/>
<feature type="transit peptide" description="Mitochondrion" evidence="4">
    <location>
        <begin position="1"/>
        <end position="35"/>
    </location>
</feature>
<feature type="chain" id="PRO_0000273341" description="Mitochondrial amidoxime reducing component 2">
    <location>
        <begin position="36"/>
        <end position="335"/>
    </location>
</feature>
<feature type="domain" description="MOSC" evidence="5">
    <location>
        <begin position="188"/>
        <end position="334"/>
    </location>
</feature>
<feature type="modified residue" description="N6-acetyllysine; alternate" evidence="2">
    <location>
        <position position="156"/>
    </location>
</feature>
<feature type="cross-link" description="Glycyl lysine isopeptide (Lys-Gly) (interchain with G-Cter in ubiquitin)" evidence="3">
    <location>
        <position position="59"/>
    </location>
</feature>
<feature type="cross-link" description="Glycyl lysine isopeptide (Lys-Gly) (interchain with G-Cter in ubiquitin)" evidence="3">
    <location>
        <position position="138"/>
    </location>
</feature>
<feature type="cross-link" description="Glycyl lysine isopeptide (Lys-Gly) (interchain with G-Cter in ubiquitin)" evidence="3">
    <location>
        <position position="144"/>
    </location>
</feature>
<feature type="cross-link" description="Glycyl lysine isopeptide (Lys-Gly) (interchain with G-Cter in ubiquitin); alternate" evidence="3">
    <location>
        <position position="156"/>
    </location>
</feature>
<feature type="cross-link" description="Glycyl lysine isopeptide (Lys-Gly) (interchain with G-Cter in ubiquitin)" evidence="3">
    <location>
        <position position="173"/>
    </location>
</feature>
<feature type="cross-link" description="Glycyl lysine isopeptide (Lys-Gly) (interchain with G-Cter in ubiquitin)" evidence="3">
    <location>
        <position position="187"/>
    </location>
</feature>
<feature type="cross-link" description="Glycyl lysine isopeptide (Lys-Gly) (interchain with G-Cter in ubiquitin)" evidence="3">
    <location>
        <position position="287"/>
    </location>
</feature>
<feature type="cross-link" description="Glycyl lysine isopeptide (Lys-Gly) (interchain with G-Cter in ubiquitin)" evidence="3">
    <location>
        <position position="294"/>
    </location>
</feature>
<feature type="sequence conflict" description="In Ref. 1; BAB01603." evidence="6" ref="1">
    <original>I</original>
    <variation>M</variation>
    <location>
        <position position="102"/>
    </location>
</feature>
<feature type="sequence conflict" description="In Ref. 1; BAB01603." evidence="6" ref="1">
    <original>T</original>
    <variation>A</variation>
    <location>
        <position position="275"/>
    </location>
</feature>
<name>MARC2_MACFA</name>
<accession>Q9GKW0</accession>
<accession>Q9N0A9</accession>
<dbReference type="EC" id="1.7.-.-"/>
<dbReference type="EMBL" id="AB046021">
    <property type="protein sequence ID" value="BAB01603.1"/>
    <property type="molecule type" value="mRNA"/>
</dbReference>
<dbReference type="EMBL" id="AB051119">
    <property type="protein sequence ID" value="BAB18145.1"/>
    <property type="molecule type" value="mRNA"/>
</dbReference>
<dbReference type="RefSeq" id="NP_001271826.1">
    <property type="nucleotide sequence ID" value="NM_001284897.1"/>
</dbReference>
<dbReference type="SMR" id="Q9GKW0"/>
<dbReference type="STRING" id="9541.ENSMFAP00000019615"/>
<dbReference type="eggNOG" id="KOG2362">
    <property type="taxonomic scope" value="Eukaryota"/>
</dbReference>
<dbReference type="Proteomes" id="UP000233100">
    <property type="component" value="Unplaced"/>
</dbReference>
<dbReference type="GO" id="GO:0005743">
    <property type="term" value="C:mitochondrial inner membrane"/>
    <property type="evidence" value="ECO:0007669"/>
    <property type="project" value="TreeGrafter"/>
</dbReference>
<dbReference type="GO" id="GO:0005741">
    <property type="term" value="C:mitochondrial outer membrane"/>
    <property type="evidence" value="ECO:0007669"/>
    <property type="project" value="UniProtKB-SubCell"/>
</dbReference>
<dbReference type="GO" id="GO:0005739">
    <property type="term" value="C:mitochondrion"/>
    <property type="evidence" value="ECO:0000250"/>
    <property type="project" value="UniProtKB"/>
</dbReference>
<dbReference type="GO" id="GO:0005777">
    <property type="term" value="C:peroxisome"/>
    <property type="evidence" value="ECO:0007669"/>
    <property type="project" value="UniProtKB-SubCell"/>
</dbReference>
<dbReference type="GO" id="GO:0030151">
    <property type="term" value="F:molybdenum ion binding"/>
    <property type="evidence" value="ECO:0007669"/>
    <property type="project" value="InterPro"/>
</dbReference>
<dbReference type="GO" id="GO:0043546">
    <property type="term" value="F:molybdopterin cofactor binding"/>
    <property type="evidence" value="ECO:0007669"/>
    <property type="project" value="TreeGrafter"/>
</dbReference>
<dbReference type="GO" id="GO:0008940">
    <property type="term" value="F:nitrate reductase activity"/>
    <property type="evidence" value="ECO:0007669"/>
    <property type="project" value="TreeGrafter"/>
</dbReference>
<dbReference type="GO" id="GO:0030170">
    <property type="term" value="F:pyridoxal phosphate binding"/>
    <property type="evidence" value="ECO:0007669"/>
    <property type="project" value="InterPro"/>
</dbReference>
<dbReference type="GO" id="GO:0042126">
    <property type="term" value="P:nitrate metabolic process"/>
    <property type="evidence" value="ECO:0007669"/>
    <property type="project" value="TreeGrafter"/>
</dbReference>
<dbReference type="InterPro" id="IPR005302">
    <property type="entry name" value="MoCF_Sase_C"/>
</dbReference>
<dbReference type="InterPro" id="IPR005303">
    <property type="entry name" value="MOCOS_middle"/>
</dbReference>
<dbReference type="InterPro" id="IPR011037">
    <property type="entry name" value="Pyrv_Knase-like_insert_dom_sf"/>
</dbReference>
<dbReference type="PANTHER" id="PTHR14237:SF27">
    <property type="entry name" value="MITOCHONDRIAL AMIDOXIME REDUCING COMPONENT 2"/>
    <property type="match status" value="1"/>
</dbReference>
<dbReference type="PANTHER" id="PTHR14237">
    <property type="entry name" value="MOLYBDOPTERIN COFACTOR SULFURASE MOSC"/>
    <property type="match status" value="1"/>
</dbReference>
<dbReference type="Pfam" id="PF03473">
    <property type="entry name" value="MOSC"/>
    <property type="match status" value="1"/>
</dbReference>
<dbReference type="Pfam" id="PF03476">
    <property type="entry name" value="MOSC_N"/>
    <property type="match status" value="1"/>
</dbReference>
<dbReference type="SUPFAM" id="SSF141673">
    <property type="entry name" value="MOSC N-terminal domain-like"/>
    <property type="match status" value="1"/>
</dbReference>
<dbReference type="SUPFAM" id="SSF50800">
    <property type="entry name" value="PK beta-barrel domain-like"/>
    <property type="match status" value="1"/>
</dbReference>
<dbReference type="PROSITE" id="PS51340">
    <property type="entry name" value="MOSC"/>
    <property type="match status" value="1"/>
</dbReference>